<gene>
    <name type="primary">norM</name>
    <name type="ordered locus">VF_1415</name>
</gene>
<dbReference type="EMBL" id="CP000020">
    <property type="protein sequence ID" value="AAW85910.1"/>
    <property type="molecule type" value="Genomic_DNA"/>
</dbReference>
<dbReference type="RefSeq" id="WP_011262007.1">
    <property type="nucleotide sequence ID" value="NC_006840.2"/>
</dbReference>
<dbReference type="RefSeq" id="YP_204798.1">
    <property type="nucleotide sequence ID" value="NC_006840.2"/>
</dbReference>
<dbReference type="SMR" id="Q5E4Y6"/>
<dbReference type="STRING" id="312309.VF_1415"/>
<dbReference type="EnsemblBacteria" id="AAW85910">
    <property type="protein sequence ID" value="AAW85910"/>
    <property type="gene ID" value="VF_1415"/>
</dbReference>
<dbReference type="GeneID" id="54164089"/>
<dbReference type="KEGG" id="vfi:VF_1415"/>
<dbReference type="PATRIC" id="fig|312309.11.peg.1429"/>
<dbReference type="eggNOG" id="COG0534">
    <property type="taxonomic scope" value="Bacteria"/>
</dbReference>
<dbReference type="HOGENOM" id="CLU_012893_6_0_6"/>
<dbReference type="OrthoDB" id="9780160at2"/>
<dbReference type="Proteomes" id="UP000000537">
    <property type="component" value="Chromosome I"/>
</dbReference>
<dbReference type="GO" id="GO:0005886">
    <property type="term" value="C:plasma membrane"/>
    <property type="evidence" value="ECO:0007669"/>
    <property type="project" value="UniProtKB-SubCell"/>
</dbReference>
<dbReference type="GO" id="GO:0015297">
    <property type="term" value="F:antiporter activity"/>
    <property type="evidence" value="ECO:0007669"/>
    <property type="project" value="UniProtKB-KW"/>
</dbReference>
<dbReference type="GO" id="GO:0042910">
    <property type="term" value="F:xenobiotic transmembrane transporter activity"/>
    <property type="evidence" value="ECO:0007669"/>
    <property type="project" value="InterPro"/>
</dbReference>
<dbReference type="GO" id="GO:0006814">
    <property type="term" value="P:sodium ion transport"/>
    <property type="evidence" value="ECO:0007669"/>
    <property type="project" value="UniProtKB-KW"/>
</dbReference>
<dbReference type="CDD" id="cd13131">
    <property type="entry name" value="MATE_NorM_like"/>
    <property type="match status" value="1"/>
</dbReference>
<dbReference type="InterPro" id="IPR002528">
    <property type="entry name" value="MATE_fam"/>
</dbReference>
<dbReference type="InterPro" id="IPR050222">
    <property type="entry name" value="MATE_MdtK"/>
</dbReference>
<dbReference type="InterPro" id="IPR048279">
    <property type="entry name" value="MdtK-like"/>
</dbReference>
<dbReference type="NCBIfam" id="TIGR00797">
    <property type="entry name" value="matE"/>
    <property type="match status" value="1"/>
</dbReference>
<dbReference type="PANTHER" id="PTHR43298:SF2">
    <property type="entry name" value="FMN_FAD EXPORTER YEEO-RELATED"/>
    <property type="match status" value="1"/>
</dbReference>
<dbReference type="PANTHER" id="PTHR43298">
    <property type="entry name" value="MULTIDRUG RESISTANCE PROTEIN NORM-RELATED"/>
    <property type="match status" value="1"/>
</dbReference>
<dbReference type="Pfam" id="PF01554">
    <property type="entry name" value="MatE"/>
    <property type="match status" value="2"/>
</dbReference>
<dbReference type="PIRSF" id="PIRSF006603">
    <property type="entry name" value="DinF"/>
    <property type="match status" value="1"/>
</dbReference>
<reference key="1">
    <citation type="journal article" date="2005" name="Proc. Natl. Acad. Sci. U.S.A.">
        <title>Complete genome sequence of Vibrio fischeri: a symbiotic bacterium with pathogenic congeners.</title>
        <authorList>
            <person name="Ruby E.G."/>
            <person name="Urbanowski M."/>
            <person name="Campbell J."/>
            <person name="Dunn A."/>
            <person name="Faini M."/>
            <person name="Gunsalus R."/>
            <person name="Lostroh P."/>
            <person name="Lupp C."/>
            <person name="McCann J."/>
            <person name="Millikan D."/>
            <person name="Schaefer A."/>
            <person name="Stabb E."/>
            <person name="Stevens A."/>
            <person name="Visick K."/>
            <person name="Whistler C."/>
            <person name="Greenberg E.P."/>
        </authorList>
    </citation>
    <scope>NUCLEOTIDE SEQUENCE [LARGE SCALE GENOMIC DNA]</scope>
    <source>
        <strain>ATCC 700601 / ES114</strain>
    </source>
</reference>
<comment type="function">
    <text evidence="1">Multidrug efflux pump that functions as a Na(+)/drug antiporter.</text>
</comment>
<comment type="subcellular location">
    <subcellularLocation>
        <location evidence="1">Cell inner membrane</location>
        <topology evidence="1">Multi-pass membrane protein</topology>
    </subcellularLocation>
</comment>
<comment type="similarity">
    <text evidence="3">Belongs to the multi antimicrobial extrusion (MATE) (TC 2.A.66.1) family.</text>
</comment>
<accession>Q5E4Y6</accession>
<name>NORM_ALIF1</name>
<sequence>MHRYQKEIVRLIKLSTPVLIASVAQTGMGFVDTVMAGGVSATDMAAVAIAASVWLPSVLFGVGLLMALVPVVAQLNGSGKSKKVPFEIHQGVYLALLTSIPIMLVLYNAGFIIAAMDVEPELYEKTQGYLHAVLWAAPAFLLFQTLRSFCEGLSLTTPAMIIGFIGLAANVPLNWMFVYGELGAPALGGVGCGVATAIVYWLMFLTMTLYTFIAPKLRRVNLYENWNKPQRKEIYRLFKLGLPVALSIFFEVTLFAAVALLVSPLGSTVVAAHQVAINFSSLIFMIPMSIAVAVSIRVGHKLGEKDLDGAKVASYCGLAFGLLMACCTAILTLIFREQIAYLYSDNQEVITLAVSLMLLAAIYQCTDAVQVVAAGALRGYKDMNAIFKCTFVSYWIVGLPSGYVLGMTDWIREPMGVYGFWFGFIGGLTTSAILLTCRLLWLQRNPTRIDMEVDELQIMH</sequence>
<evidence type="ECO:0000250" key="1"/>
<evidence type="ECO:0000255" key="2"/>
<evidence type="ECO:0000305" key="3"/>
<protein>
    <recommendedName>
        <fullName>Multidrug resistance protein NorM</fullName>
    </recommendedName>
    <alternativeName>
        <fullName>Multidrug-efflux transporter</fullName>
    </alternativeName>
    <alternativeName>
        <fullName>Na(+)/drug antiporter</fullName>
    </alternativeName>
</protein>
<proteinExistence type="inferred from homology"/>
<keyword id="KW-0050">Antiport</keyword>
<keyword id="KW-0997">Cell inner membrane</keyword>
<keyword id="KW-1003">Cell membrane</keyword>
<keyword id="KW-0406">Ion transport</keyword>
<keyword id="KW-0472">Membrane</keyword>
<keyword id="KW-1185">Reference proteome</keyword>
<keyword id="KW-0915">Sodium</keyword>
<keyword id="KW-0739">Sodium transport</keyword>
<keyword id="KW-0812">Transmembrane</keyword>
<keyword id="KW-1133">Transmembrane helix</keyword>
<keyword id="KW-0813">Transport</keyword>
<feature type="chain" id="PRO_0000164245" description="Multidrug resistance protein NorM">
    <location>
        <begin position="1"/>
        <end position="460"/>
    </location>
</feature>
<feature type="transmembrane region" description="Helical" evidence="2">
    <location>
        <begin position="18"/>
        <end position="38"/>
    </location>
</feature>
<feature type="transmembrane region" description="Helical" evidence="2">
    <location>
        <begin position="53"/>
        <end position="73"/>
    </location>
</feature>
<feature type="transmembrane region" description="Helical" evidence="2">
    <location>
        <begin position="94"/>
        <end position="114"/>
    </location>
</feature>
<feature type="transmembrane region" description="Helical" evidence="2">
    <location>
        <begin position="126"/>
        <end position="146"/>
    </location>
</feature>
<feature type="transmembrane region" description="Helical" evidence="2">
    <location>
        <begin position="159"/>
        <end position="179"/>
    </location>
</feature>
<feature type="transmembrane region" description="Helical" evidence="2">
    <location>
        <begin position="185"/>
        <end position="205"/>
    </location>
</feature>
<feature type="transmembrane region" description="Helical" evidence="2">
    <location>
        <begin position="242"/>
        <end position="262"/>
    </location>
</feature>
<feature type="transmembrane region" description="Helical" evidence="2">
    <location>
        <begin position="276"/>
        <end position="296"/>
    </location>
</feature>
<feature type="transmembrane region" description="Helical" evidence="2">
    <location>
        <begin position="315"/>
        <end position="335"/>
    </location>
</feature>
<feature type="transmembrane region" description="Helical" evidence="2">
    <location>
        <begin position="349"/>
        <end position="369"/>
    </location>
</feature>
<feature type="transmembrane region" description="Helical" evidence="2">
    <location>
        <begin position="391"/>
        <end position="411"/>
    </location>
</feature>
<feature type="transmembrane region" description="Helical" evidence="2">
    <location>
        <begin position="415"/>
        <end position="435"/>
    </location>
</feature>
<organism>
    <name type="scientific">Aliivibrio fischeri (strain ATCC 700601 / ES114)</name>
    <name type="common">Vibrio fischeri</name>
    <dbReference type="NCBI Taxonomy" id="312309"/>
    <lineage>
        <taxon>Bacteria</taxon>
        <taxon>Pseudomonadati</taxon>
        <taxon>Pseudomonadota</taxon>
        <taxon>Gammaproteobacteria</taxon>
        <taxon>Vibrionales</taxon>
        <taxon>Vibrionaceae</taxon>
        <taxon>Aliivibrio</taxon>
    </lineage>
</organism>